<organism>
    <name type="scientific">Human immunodeficiency virus type 1 group M subtype F1 (isolate VI850)</name>
    <name type="common">HIV-1</name>
    <dbReference type="NCBI Taxonomy" id="388813"/>
    <lineage>
        <taxon>Viruses</taxon>
        <taxon>Riboviria</taxon>
        <taxon>Pararnavirae</taxon>
        <taxon>Artverviricota</taxon>
        <taxon>Revtraviricetes</taxon>
        <taxon>Ortervirales</taxon>
        <taxon>Retroviridae</taxon>
        <taxon>Orthoretrovirinae</taxon>
        <taxon>Lentivirus</taxon>
        <taxon>Human immunodeficiency virus type 1</taxon>
    </lineage>
</organism>
<sequence>MENRWQLMIVWQVDRMRINTWKSLVKYHMYVSKKAKGWSYRHHFQSRHPRVSSEVHIPLEEVKLVITTYWGLHPGEREWHLGQGVSIEWRQGKYRTQIDPGLADQLIHIYYFDCFSESAIRKAILGHRISPRCNYQAGHNKVGSLQYLALTALIAPEKTKPPLPSVQKLVEDRWNKPQETRGHRGSHTMNGH</sequence>
<protein>
    <recommendedName>
        <fullName evidence="2">Virion infectivity factor</fullName>
        <shortName evidence="2">Vif</shortName>
    </recommendedName>
    <alternativeName>
        <fullName evidence="2">SOR protein</fullName>
    </alternativeName>
    <component>
        <recommendedName>
            <fullName evidence="2">p17</fullName>
        </recommendedName>
    </component>
    <component>
        <recommendedName>
            <fullName evidence="2">p7</fullName>
        </recommendedName>
    </component>
</protein>
<name>VIF_HV1VI</name>
<feature type="chain" id="PRO_0000245144" description="Virion infectivity factor" evidence="2">
    <location>
        <begin position="1"/>
        <end position="192"/>
    </location>
</feature>
<feature type="chain" id="PRO_0000245145" description="p17" evidence="2">
    <location>
        <begin position="1"/>
        <end position="150"/>
    </location>
</feature>
<feature type="chain" id="PRO_0000245146" description="p7" evidence="2">
    <location>
        <begin position="151"/>
        <end position="192"/>
    </location>
</feature>
<feature type="region of interest" description="Interaction with host APOBEC3F; F1-box" evidence="2">
    <location>
        <begin position="14"/>
        <end position="17"/>
    </location>
</feature>
<feature type="region of interest" description="Interaction with host APOBEC3G; G-box" evidence="2">
    <location>
        <begin position="40"/>
        <end position="44"/>
    </location>
</feature>
<feature type="region of interest" description="Interaction with host APOBEC3F and APOBEC3G; FG-box" evidence="2">
    <location>
        <begin position="54"/>
        <end position="72"/>
    </location>
</feature>
<feature type="region of interest" description="Interaction with host APOBEC3F; F2-box" evidence="2">
    <location>
        <begin position="74"/>
        <end position="79"/>
    </location>
</feature>
<feature type="region of interest" description="RNA-binding" evidence="2">
    <location>
        <begin position="75"/>
        <end position="114"/>
    </location>
</feature>
<feature type="region of interest" description="SOCS box-like" evidence="2">
    <location>
        <begin position="151"/>
        <end position="180"/>
    </location>
</feature>
<feature type="region of interest" description="Multimerization" evidence="2">
    <location>
        <begin position="151"/>
        <end position="164"/>
    </location>
</feature>
<feature type="region of interest" description="Disordered" evidence="3">
    <location>
        <begin position="171"/>
        <end position="192"/>
    </location>
</feature>
<feature type="region of interest" description="Membrane association" evidence="2">
    <location>
        <begin position="171"/>
        <end position="172"/>
    </location>
</feature>
<feature type="short sequence motif" description="HCCH motif" evidence="2">
    <location>
        <begin position="108"/>
        <end position="139"/>
    </location>
</feature>
<feature type="short sequence motif" description="BC-box-like motif" evidence="2">
    <location>
        <begin position="144"/>
        <end position="153"/>
    </location>
</feature>
<feature type="compositionally biased region" description="Basic and acidic residues" evidence="3">
    <location>
        <begin position="171"/>
        <end position="182"/>
    </location>
</feature>
<feature type="binding site" evidence="2">
    <location>
        <position position="108"/>
    </location>
    <ligand>
        <name>Zn(2+)</name>
        <dbReference type="ChEBI" id="CHEBI:29105"/>
    </ligand>
</feature>
<feature type="binding site" evidence="2">
    <location>
        <position position="114"/>
    </location>
    <ligand>
        <name>Zn(2+)</name>
        <dbReference type="ChEBI" id="CHEBI:29105"/>
    </ligand>
</feature>
<feature type="binding site" evidence="2">
    <location>
        <position position="133"/>
    </location>
    <ligand>
        <name>Zn(2+)</name>
        <dbReference type="ChEBI" id="CHEBI:29105"/>
    </ligand>
</feature>
<feature type="binding site" evidence="2">
    <location>
        <position position="139"/>
    </location>
    <ligand>
        <name>Zn(2+)</name>
        <dbReference type="ChEBI" id="CHEBI:29105"/>
    </ligand>
</feature>
<feature type="site" description="Cleavage in virion (by viral protease)" evidence="2">
    <location>
        <begin position="150"/>
        <end position="151"/>
    </location>
</feature>
<feature type="modified residue" description="Phosphothreonine; by host MAP4K1" evidence="2">
    <location>
        <position position="96"/>
    </location>
</feature>
<feature type="modified residue" description="Phosphoserine; by host" evidence="2">
    <location>
        <position position="144"/>
    </location>
</feature>
<feature type="modified residue" description="Phosphoserine; by host MAP4K1" evidence="2">
    <location>
        <position position="165"/>
    </location>
</feature>
<feature type="modified residue" description="Phosphothreonine; by host" evidence="2">
    <location>
        <position position="188"/>
    </location>
</feature>
<gene>
    <name evidence="2" type="primary">vif</name>
</gene>
<proteinExistence type="inferred from homology"/>
<accession>Q9QSR2</accession>
<evidence type="ECO:0000250" key="1">
    <source>
        <dbReference type="UniProtKB" id="O70897"/>
    </source>
</evidence>
<evidence type="ECO:0000255" key="2">
    <source>
        <dbReference type="HAMAP-Rule" id="MF_04081"/>
    </source>
</evidence>
<evidence type="ECO:0000256" key="3">
    <source>
        <dbReference type="SAM" id="MobiDB-lite"/>
    </source>
</evidence>
<reference key="1">
    <citation type="journal article" date="2000" name="Virology">
        <title>Virtually full-length subtype F and F/D recombinant HIV-1 from Africa and South America.</title>
        <authorList>
            <person name="Laukkanen T."/>
            <person name="Carr J.K."/>
            <person name="Janssens W."/>
            <person name="Liitsola K."/>
            <person name="Gotte D."/>
            <person name="McCutchan F.E."/>
            <person name="Op de Coul E."/>
            <person name="Cornelissen M."/>
            <person name="Heyndrickx L."/>
            <person name="van der Groen G."/>
            <person name="Salminen M.O."/>
        </authorList>
    </citation>
    <scope>NUCLEOTIDE SEQUENCE [GENOMIC DNA]</scope>
</reference>
<dbReference type="EMBL" id="AF077336">
    <property type="protein sequence ID" value="AAD46089.1"/>
    <property type="molecule type" value="Genomic_DNA"/>
</dbReference>
<dbReference type="SMR" id="Q9QSR2"/>
<dbReference type="Proteomes" id="UP000007418">
    <property type="component" value="Segment"/>
</dbReference>
<dbReference type="GO" id="GO:0030430">
    <property type="term" value="C:host cell cytoplasm"/>
    <property type="evidence" value="ECO:0007669"/>
    <property type="project" value="UniProtKB-SubCell"/>
</dbReference>
<dbReference type="GO" id="GO:0020002">
    <property type="term" value="C:host cell plasma membrane"/>
    <property type="evidence" value="ECO:0007669"/>
    <property type="project" value="UniProtKB-SubCell"/>
</dbReference>
<dbReference type="GO" id="GO:0016020">
    <property type="term" value="C:membrane"/>
    <property type="evidence" value="ECO:0007669"/>
    <property type="project" value="UniProtKB-UniRule"/>
</dbReference>
<dbReference type="GO" id="GO:0044423">
    <property type="term" value="C:virion component"/>
    <property type="evidence" value="ECO:0007669"/>
    <property type="project" value="UniProtKB-UniRule"/>
</dbReference>
<dbReference type="GO" id="GO:0046872">
    <property type="term" value="F:metal ion binding"/>
    <property type="evidence" value="ECO:0007669"/>
    <property type="project" value="UniProtKB-KW"/>
</dbReference>
<dbReference type="GO" id="GO:0003723">
    <property type="term" value="F:RNA binding"/>
    <property type="evidence" value="ECO:0007669"/>
    <property type="project" value="UniProtKB-UniRule"/>
</dbReference>
<dbReference type="GO" id="GO:0019058">
    <property type="term" value="P:viral life cycle"/>
    <property type="evidence" value="ECO:0007669"/>
    <property type="project" value="InterPro"/>
</dbReference>
<dbReference type="HAMAP" id="MF_04081">
    <property type="entry name" value="HIV_VIF"/>
    <property type="match status" value="1"/>
</dbReference>
<dbReference type="InterPro" id="IPR000475">
    <property type="entry name" value="Vif"/>
</dbReference>
<dbReference type="Pfam" id="PF00559">
    <property type="entry name" value="Vif"/>
    <property type="match status" value="1"/>
</dbReference>
<dbReference type="PRINTS" id="PR00349">
    <property type="entry name" value="VIRIONINFFCT"/>
</dbReference>
<comment type="function">
    <text evidence="2">Counteracts the innate antiviral activity of host APOBEC3F and APOBEC3G by promoting their ubiquitination and degradation. Acts as a substrate recognition component of an E3 ubiquitin-protein ligase complex: mechanistically, Vif hijacks a host cullin-5-RING E3 ubiquitin-protein ligase complex (ECS complex) and the transcription coactivator CBFB/CBF-beta to form an active E3 ubiquitin-protein ligase complex that targets APOBEC3G and APOBEC3F for polyubiquitination, leading to their degradation by the proteasome. Vif interaction with APOBEC3G also blocks its cytidine deaminase activity in a proteasome-independent manner, suggesting a dual inhibitory mechanism. May interact directly with APOBEC3G mRNA in order to inhibit its translation. Association with CBFB/CBF-beta also inhibits the transcription coactivator activity of CBFB/CBF-beta. Seems to play a role in viral morphology by affecting the stability of the viral nucleoprotein core. Finally, Vif also contributes to the G2 cell cycle arrest observed in HIV infected cells.</text>
</comment>
<comment type="subunit">
    <text evidence="1">Homomultimer; in vitro and presumably in vivo. Interacts with viral RNA and Pr55Gag precursor; these interactions mediate Vif incorporation into the virion. Interacts with the viral reverse transcriptase. Forms cullin-5-RING E3 ubiquitin-protein ligase complex (ECS complex) by interacting with host CUL5, RBX2, elongin BC complex (ELOB and ELOC) and CBFB/CBF-beta. Within the ECS complex, Vif interacts directly with host CUL5, ELOC and APOBEC (APOBEC3F and APOBEC3G) substrates. The ECS complex also contains some single-stranded RNA (ssRNA) that acts as a glue that bridges Vif with APOBEC (APOBEC3F and APOBEC3G) substrates. Interacts with host UBCE7IP1 isoform 3/ZIN and possibly with SAT. Interacts with host tyrosine kinases HCK and FYN; these interactions may decrease level of phosphorylated APOBEC3G incorporation into virions. Interacts with host ABCE1; this interaction may play a role in protecting viral RNA from damage during viral assembly. Interacts with host MDM2; this interaction targets Vif for degradation by the proteasome.</text>
</comment>
<comment type="subcellular location">
    <subcellularLocation>
        <location evidence="2">Host cytoplasm</location>
    </subcellularLocation>
    <subcellularLocation>
        <location evidence="2">Host cell membrane</location>
        <topology evidence="2">Peripheral membrane protein</topology>
        <orientation evidence="2">Cytoplasmic side</orientation>
    </subcellularLocation>
    <subcellularLocation>
        <location evidence="2">Virion</location>
    </subcellularLocation>
    <text evidence="2">In the cytoplasm, seems to colocalize with intermediate filament vimentin. A fraction is associated with the cytoplasmic side of cellular membranes, presumably via the interaction with Pr55Gag precursor. Incorporated in virions at a ratio of approximately 7 to 20 molecules per virion.</text>
</comment>
<comment type="induction">
    <text evidence="2">Expressed late during infection in a Rev-dependent manner.</text>
</comment>
<comment type="domain">
    <text evidence="2">The BC-like-box motif mediates the interaction with elongin BC complex.</text>
</comment>
<comment type="domain">
    <text evidence="2">The HCCH motif (H-x(5)-C-x(18)-C-x(5)-H) mediates the interaction with CUL5.</text>
</comment>
<comment type="PTM">
    <text evidence="2">Processed in virion by the viral protease.</text>
</comment>
<comment type="PTM">
    <text evidence="2">Highly phosphorylated on serine and threonine residues.</text>
</comment>
<comment type="PTM">
    <text evidence="2">Polyubiquitinated and degraded by the proteasome in the presence of APOBEC3G.</text>
</comment>
<comment type="miscellaneous">
    <text evidence="2">Vif-defective viruses show catastrophic failure in reverse transcription due to APOBEC-induced mutations that initiate a DNA base repair pathway and compromise the structural integrity of the ssDNA. In the absence of Vif, the virion is morphologically abnormal.</text>
</comment>
<comment type="miscellaneous">
    <text evidence="2">HIV-1 lineages are divided in three main groups, M (for Major), O (for Outlier), and N (for New, or Non-M, Non-O). The vast majority of strains found worldwide belong to the group M. Group O seems to be endemic to and largely confined to Cameroon and neighboring countries in West Central Africa, where these viruses represent a small minority of HIV-1 strains. The group N is represented by a limited number of isolates from Cameroonian persons. The group M is further subdivided in 9 clades or subtypes (A to D, F to H, J and K).</text>
</comment>
<comment type="miscellaneous">
    <text evidence="2">Required for replication in 'nonpermissive' cells, including primary T-cells, macrophages and certain T-cell lines, but is dispensable for replication in 'permissive' cell lines, such as 293T cells. In nonpermissive cells, Vif-defective viruses can produce virions, but they fail to complete reverse transcription and cannot successfully infect new cells.</text>
</comment>
<comment type="similarity">
    <text evidence="2">Belongs to the primate lentivirus group Vif protein family.</text>
</comment>
<organismHost>
    <name type="scientific">Homo sapiens</name>
    <name type="common">Human</name>
    <dbReference type="NCBI Taxonomy" id="9606"/>
</organismHost>
<keyword id="KW-0014">AIDS</keyword>
<keyword id="KW-1032">Host cell membrane</keyword>
<keyword id="KW-1035">Host cytoplasm</keyword>
<keyword id="KW-1043">Host membrane</keyword>
<keyword id="KW-0945">Host-virus interaction</keyword>
<keyword id="KW-0472">Membrane</keyword>
<keyword id="KW-0479">Metal-binding</keyword>
<keyword id="KW-0597">Phosphoprotein</keyword>
<keyword id="KW-1185">Reference proteome</keyword>
<keyword id="KW-0694">RNA-binding</keyword>
<keyword id="KW-0832">Ubl conjugation</keyword>
<keyword id="KW-0833">Ubl conjugation pathway</keyword>
<keyword id="KW-0946">Virion</keyword>
<keyword id="KW-0862">Zinc</keyword>